<feature type="initiator methionine" description="Removed" evidence="1">
    <location>
        <position position="1"/>
    </location>
</feature>
<feature type="chain" id="PRO_0000402048" description="Methylthioribose-1-phosphate isomerase">
    <location>
        <begin position="2"/>
        <end position="411"/>
    </location>
</feature>
<feature type="active site" description="Proton donor" evidence="2">
    <location>
        <position position="280"/>
    </location>
</feature>
<feature type="site" description="Transition state stabilizer" evidence="2">
    <location>
        <position position="181"/>
    </location>
</feature>
<feature type="modified residue" description="N-acetylserine" evidence="1">
    <location>
        <position position="2"/>
    </location>
</feature>
<feature type="modified residue" description="Phosphoserine" evidence="1">
    <location>
        <position position="351"/>
    </location>
</feature>
<accession>C7GXT0</accession>
<gene>
    <name evidence="2" type="primary">MRI1</name>
    <name type="ORF">C1Q_05342</name>
</gene>
<organism>
    <name type="scientific">Saccharomyces cerevisiae (strain JAY291)</name>
    <name type="common">Baker's yeast</name>
    <dbReference type="NCBI Taxonomy" id="574961"/>
    <lineage>
        <taxon>Eukaryota</taxon>
        <taxon>Fungi</taxon>
        <taxon>Dikarya</taxon>
        <taxon>Ascomycota</taxon>
        <taxon>Saccharomycotina</taxon>
        <taxon>Saccharomycetes</taxon>
        <taxon>Saccharomycetales</taxon>
        <taxon>Saccharomycetaceae</taxon>
        <taxon>Saccharomyces</taxon>
    </lineage>
</organism>
<evidence type="ECO:0000250" key="1">
    <source>
        <dbReference type="UniProtKB" id="Q06489"/>
    </source>
</evidence>
<evidence type="ECO:0000255" key="2">
    <source>
        <dbReference type="HAMAP-Rule" id="MF_03119"/>
    </source>
</evidence>
<protein>
    <recommendedName>
        <fullName evidence="2">Methylthioribose-1-phosphate isomerase</fullName>
        <shortName evidence="2">M1Pi</shortName>
        <shortName evidence="2">MTR-1-P isomerase</shortName>
        <ecNumber evidence="2">5.3.1.23</ecNumber>
    </recommendedName>
    <alternativeName>
        <fullName evidence="2">S-methyl-5-thioribose-1-phosphate isomerase</fullName>
    </alternativeName>
    <alternativeName>
        <fullName evidence="2">Translation initiation factor eIF-2B subunit alpha/beta/delta-like protein</fullName>
    </alternativeName>
</protein>
<proteinExistence type="inferred from homology"/>
<reference key="1">
    <citation type="journal article" date="2009" name="Genome Res.">
        <title>Genome structure of a Saccharomyces cerevisiae strain widely used in bioethanol production.</title>
        <authorList>
            <person name="Argueso J.L."/>
            <person name="Carazzolle M.F."/>
            <person name="Mieczkowski P.A."/>
            <person name="Duarte F.M."/>
            <person name="Netto O.V.C."/>
            <person name="Missawa S.K."/>
            <person name="Galzerani F."/>
            <person name="Costa G.G.L."/>
            <person name="Vidal R.O."/>
            <person name="Noronha M.F."/>
            <person name="Dominska M."/>
            <person name="Andrietta M.G.S."/>
            <person name="Andrietta S.R."/>
            <person name="Cunha A.F."/>
            <person name="Gomes L.H."/>
            <person name="Tavares F.C.A."/>
            <person name="Alcarde A.R."/>
            <person name="Dietrich F.S."/>
            <person name="McCusker J.H."/>
            <person name="Petes T.D."/>
            <person name="Pereira G.A.G."/>
        </authorList>
    </citation>
    <scope>NUCLEOTIDE SEQUENCE [LARGE SCALE GENOMIC DNA]</scope>
    <source>
        <strain>JAY291</strain>
    </source>
</reference>
<keyword id="KW-0007">Acetylation</keyword>
<keyword id="KW-0028">Amino-acid biosynthesis</keyword>
<keyword id="KW-0963">Cytoplasm</keyword>
<keyword id="KW-0413">Isomerase</keyword>
<keyword id="KW-0486">Methionine biosynthesis</keyword>
<keyword id="KW-0539">Nucleus</keyword>
<keyword id="KW-0597">Phosphoprotein</keyword>
<dbReference type="EC" id="5.3.1.23" evidence="2"/>
<dbReference type="EMBL" id="ACFL01000436">
    <property type="protein sequence ID" value="EEU04405.1"/>
    <property type="molecule type" value="Genomic_DNA"/>
</dbReference>
<dbReference type="SMR" id="C7GXT0"/>
<dbReference type="OrthoDB" id="29993at4893"/>
<dbReference type="UniPathway" id="UPA00904">
    <property type="reaction ID" value="UER00874"/>
</dbReference>
<dbReference type="Proteomes" id="UP000008073">
    <property type="component" value="Unassembled WGS sequence"/>
</dbReference>
<dbReference type="GO" id="GO:0005737">
    <property type="term" value="C:cytoplasm"/>
    <property type="evidence" value="ECO:0007669"/>
    <property type="project" value="UniProtKB-SubCell"/>
</dbReference>
<dbReference type="GO" id="GO:0005634">
    <property type="term" value="C:nucleus"/>
    <property type="evidence" value="ECO:0007669"/>
    <property type="project" value="UniProtKB-SubCell"/>
</dbReference>
<dbReference type="GO" id="GO:0046523">
    <property type="term" value="F:S-methyl-5-thioribose-1-phosphate isomerase activity"/>
    <property type="evidence" value="ECO:0007669"/>
    <property type="project" value="UniProtKB-UniRule"/>
</dbReference>
<dbReference type="GO" id="GO:0019509">
    <property type="term" value="P:L-methionine salvage from methylthioadenosine"/>
    <property type="evidence" value="ECO:0007669"/>
    <property type="project" value="UniProtKB-UniRule"/>
</dbReference>
<dbReference type="FunFam" id="1.20.120.420:FF:000006">
    <property type="entry name" value="Methylthioribose-1-phosphate isomerase"/>
    <property type="match status" value="1"/>
</dbReference>
<dbReference type="FunFam" id="3.40.50.10470:FF:000026">
    <property type="entry name" value="Methylthioribose-1-phosphate isomerase"/>
    <property type="match status" value="1"/>
</dbReference>
<dbReference type="Gene3D" id="1.20.120.420">
    <property type="entry name" value="translation initiation factor eif-2b, domain 1"/>
    <property type="match status" value="1"/>
</dbReference>
<dbReference type="Gene3D" id="3.40.50.10470">
    <property type="entry name" value="Translation initiation factor eif-2b, domain 2"/>
    <property type="match status" value="1"/>
</dbReference>
<dbReference type="HAMAP" id="MF_01678">
    <property type="entry name" value="Salvage_MtnA"/>
    <property type="match status" value="1"/>
</dbReference>
<dbReference type="InterPro" id="IPR000649">
    <property type="entry name" value="IF-2B-related"/>
</dbReference>
<dbReference type="InterPro" id="IPR005251">
    <property type="entry name" value="IF-M1Pi"/>
</dbReference>
<dbReference type="InterPro" id="IPR042529">
    <property type="entry name" value="IF_2B-like_C"/>
</dbReference>
<dbReference type="InterPro" id="IPR011559">
    <property type="entry name" value="Initiation_fac_2B_a/b/d"/>
</dbReference>
<dbReference type="InterPro" id="IPR027363">
    <property type="entry name" value="M1Pi_N"/>
</dbReference>
<dbReference type="InterPro" id="IPR037171">
    <property type="entry name" value="NagB/RpiA_transferase-like"/>
</dbReference>
<dbReference type="NCBIfam" id="TIGR00524">
    <property type="entry name" value="eIF-2B_rel"/>
    <property type="match status" value="1"/>
</dbReference>
<dbReference type="NCBIfam" id="NF004326">
    <property type="entry name" value="PRK05720.1"/>
    <property type="match status" value="1"/>
</dbReference>
<dbReference type="NCBIfam" id="TIGR00512">
    <property type="entry name" value="salvage_mtnA"/>
    <property type="match status" value="1"/>
</dbReference>
<dbReference type="PANTHER" id="PTHR43475">
    <property type="entry name" value="METHYLTHIORIBOSE-1-PHOSPHATE ISOMERASE"/>
    <property type="match status" value="1"/>
</dbReference>
<dbReference type="PANTHER" id="PTHR43475:SF1">
    <property type="entry name" value="METHYLTHIORIBOSE-1-PHOSPHATE ISOMERASE"/>
    <property type="match status" value="1"/>
</dbReference>
<dbReference type="Pfam" id="PF01008">
    <property type="entry name" value="IF-2B"/>
    <property type="match status" value="1"/>
</dbReference>
<dbReference type="SUPFAM" id="SSF100950">
    <property type="entry name" value="NagB/RpiA/CoA transferase-like"/>
    <property type="match status" value="1"/>
</dbReference>
<comment type="function">
    <text evidence="2">Catalyzes the interconversion of methylthioribose-1-phosphate (MTR-1-P) into methylthioribulose-1-phosphate (MTRu-1-P).</text>
</comment>
<comment type="catalytic activity">
    <reaction evidence="2">
        <text>5-(methylsulfanyl)-alpha-D-ribose 1-phosphate = 5-(methylsulfanyl)-D-ribulose 1-phosphate</text>
        <dbReference type="Rhea" id="RHEA:19989"/>
        <dbReference type="ChEBI" id="CHEBI:58533"/>
        <dbReference type="ChEBI" id="CHEBI:58548"/>
        <dbReference type="EC" id="5.3.1.23"/>
    </reaction>
</comment>
<comment type="pathway">
    <text evidence="2">Amino-acid biosynthesis; L-methionine biosynthesis via salvage pathway; L-methionine from S-methyl-5-thio-alpha-D-ribose 1-phosphate: step 1/6.</text>
</comment>
<comment type="subunit">
    <text>Homodimer.</text>
</comment>
<comment type="subcellular location">
    <subcellularLocation>
        <location evidence="2">Cytoplasm</location>
    </subcellularLocation>
    <subcellularLocation>
        <location evidence="2">Nucleus</location>
    </subcellularLocation>
</comment>
<comment type="similarity">
    <text evidence="2">Belongs to the eIF-2B alpha/beta/delta subunits family. MtnA subfamily.</text>
</comment>
<name>MTNA_YEAS2</name>
<sequence length="411" mass="45036">MSLEAIVFDRSELENVSVKVLDQLLLPYTTKYVPIHTIDDGYSVIKSMQVRGAPAIAIVGSLSVLTEVQLIKHNPTSDVATLYSLVNWESTKTVLNKRLDFLLSSRPTAVNLSNSLVEIKNILKSSSDLKAFDGSLYNYVCELIDEDLANNMKMGDNGAKYLIDVLQKDGFKDEFAVLTICNTGSLATSGYGTALGVIRSLWKDSLAKTDKADSGLDNEKCPRMGHVFPLETRPYNQGSRLTAYELVYDKIPSTLITDSSIAYRIRTSPIPIKAAFVGADRIVRNGDTANKIGTLQLAVICKQFGIKFFVVAPKTTIDNVTETGDDIIVEERNPEEFKVVTGTVINPENGSLILNESGEPITGKVGIAPLEINVWNPAFDITPHELIDGIITEEGVFTKNSSGEFQLESLF</sequence>